<feature type="chain" id="PRO_0000243291" description="Dephospho-CoA kinase">
    <location>
        <begin position="1"/>
        <end position="201"/>
    </location>
</feature>
<feature type="domain" description="DPCK" evidence="1">
    <location>
        <begin position="3"/>
        <end position="201"/>
    </location>
</feature>
<feature type="binding site" evidence="1">
    <location>
        <begin position="11"/>
        <end position="16"/>
    </location>
    <ligand>
        <name>ATP</name>
        <dbReference type="ChEBI" id="CHEBI:30616"/>
    </ligand>
</feature>
<protein>
    <recommendedName>
        <fullName evidence="1">Dephospho-CoA kinase</fullName>
        <ecNumber evidence="1">2.7.1.24</ecNumber>
    </recommendedName>
    <alternativeName>
        <fullName evidence="1">Dephosphocoenzyme A kinase</fullName>
    </alternativeName>
</protein>
<comment type="function">
    <text evidence="1">Catalyzes the phosphorylation of the 3'-hydroxyl group of dephosphocoenzyme A to form coenzyme A.</text>
</comment>
<comment type="catalytic activity">
    <reaction evidence="1">
        <text>3'-dephospho-CoA + ATP = ADP + CoA + H(+)</text>
        <dbReference type="Rhea" id="RHEA:18245"/>
        <dbReference type="ChEBI" id="CHEBI:15378"/>
        <dbReference type="ChEBI" id="CHEBI:30616"/>
        <dbReference type="ChEBI" id="CHEBI:57287"/>
        <dbReference type="ChEBI" id="CHEBI:57328"/>
        <dbReference type="ChEBI" id="CHEBI:456216"/>
        <dbReference type="EC" id="2.7.1.24"/>
    </reaction>
</comment>
<comment type="pathway">
    <text evidence="1">Cofactor biosynthesis; coenzyme A biosynthesis; CoA from (R)-pantothenate: step 5/5.</text>
</comment>
<comment type="subcellular location">
    <subcellularLocation>
        <location evidence="1">Cytoplasm</location>
    </subcellularLocation>
</comment>
<comment type="similarity">
    <text evidence="1">Belongs to the CoaE family.</text>
</comment>
<name>COAE_GEOMG</name>
<dbReference type="EC" id="2.7.1.24" evidence="1"/>
<dbReference type="EMBL" id="CP000148">
    <property type="protein sequence ID" value="ABB33241.1"/>
    <property type="molecule type" value="Genomic_DNA"/>
</dbReference>
<dbReference type="RefSeq" id="WP_004514340.1">
    <property type="nucleotide sequence ID" value="NC_007517.1"/>
</dbReference>
<dbReference type="SMR" id="Q39R83"/>
<dbReference type="STRING" id="269799.Gmet_3026"/>
<dbReference type="KEGG" id="gme:Gmet_3026"/>
<dbReference type="eggNOG" id="COG0237">
    <property type="taxonomic scope" value="Bacteria"/>
</dbReference>
<dbReference type="HOGENOM" id="CLU_057180_0_0_7"/>
<dbReference type="UniPathway" id="UPA00241">
    <property type="reaction ID" value="UER00356"/>
</dbReference>
<dbReference type="Proteomes" id="UP000007073">
    <property type="component" value="Chromosome"/>
</dbReference>
<dbReference type="GO" id="GO:0005737">
    <property type="term" value="C:cytoplasm"/>
    <property type="evidence" value="ECO:0007669"/>
    <property type="project" value="UniProtKB-SubCell"/>
</dbReference>
<dbReference type="GO" id="GO:0005524">
    <property type="term" value="F:ATP binding"/>
    <property type="evidence" value="ECO:0007669"/>
    <property type="project" value="UniProtKB-UniRule"/>
</dbReference>
<dbReference type="GO" id="GO:0004140">
    <property type="term" value="F:dephospho-CoA kinase activity"/>
    <property type="evidence" value="ECO:0007669"/>
    <property type="project" value="UniProtKB-UniRule"/>
</dbReference>
<dbReference type="GO" id="GO:0015937">
    <property type="term" value="P:coenzyme A biosynthetic process"/>
    <property type="evidence" value="ECO:0007669"/>
    <property type="project" value="UniProtKB-UniRule"/>
</dbReference>
<dbReference type="CDD" id="cd02022">
    <property type="entry name" value="DPCK"/>
    <property type="match status" value="1"/>
</dbReference>
<dbReference type="FunFam" id="3.40.50.300:FF:000991">
    <property type="entry name" value="Dephospho-CoA kinase"/>
    <property type="match status" value="1"/>
</dbReference>
<dbReference type="Gene3D" id="3.40.50.300">
    <property type="entry name" value="P-loop containing nucleotide triphosphate hydrolases"/>
    <property type="match status" value="1"/>
</dbReference>
<dbReference type="HAMAP" id="MF_00376">
    <property type="entry name" value="Dephospho_CoA_kinase"/>
    <property type="match status" value="1"/>
</dbReference>
<dbReference type="InterPro" id="IPR001977">
    <property type="entry name" value="Depp_CoAkinase"/>
</dbReference>
<dbReference type="InterPro" id="IPR027417">
    <property type="entry name" value="P-loop_NTPase"/>
</dbReference>
<dbReference type="NCBIfam" id="TIGR00152">
    <property type="entry name" value="dephospho-CoA kinase"/>
    <property type="match status" value="1"/>
</dbReference>
<dbReference type="PANTHER" id="PTHR10695:SF46">
    <property type="entry name" value="BIFUNCTIONAL COENZYME A SYNTHASE-RELATED"/>
    <property type="match status" value="1"/>
</dbReference>
<dbReference type="PANTHER" id="PTHR10695">
    <property type="entry name" value="DEPHOSPHO-COA KINASE-RELATED"/>
    <property type="match status" value="1"/>
</dbReference>
<dbReference type="Pfam" id="PF01121">
    <property type="entry name" value="CoaE"/>
    <property type="match status" value="1"/>
</dbReference>
<dbReference type="SUPFAM" id="SSF52540">
    <property type="entry name" value="P-loop containing nucleoside triphosphate hydrolases"/>
    <property type="match status" value="1"/>
</dbReference>
<dbReference type="PROSITE" id="PS51219">
    <property type="entry name" value="DPCK"/>
    <property type="match status" value="1"/>
</dbReference>
<gene>
    <name evidence="1" type="primary">coaE</name>
    <name type="ordered locus">Gmet_3026</name>
</gene>
<reference key="1">
    <citation type="journal article" date="2009" name="BMC Microbiol.">
        <title>The genome sequence of Geobacter metallireducens: features of metabolism, physiology and regulation common and dissimilar to Geobacter sulfurreducens.</title>
        <authorList>
            <person name="Aklujkar M."/>
            <person name="Krushkal J."/>
            <person name="DiBartolo G."/>
            <person name="Lapidus A."/>
            <person name="Land M.L."/>
            <person name="Lovley D.R."/>
        </authorList>
    </citation>
    <scope>NUCLEOTIDE SEQUENCE [LARGE SCALE GENOMIC DNA]</scope>
    <source>
        <strain>ATCC 53774 / DSM 7210 / GS-15</strain>
    </source>
</reference>
<organism>
    <name type="scientific">Geobacter metallireducens (strain ATCC 53774 / DSM 7210 / GS-15)</name>
    <dbReference type="NCBI Taxonomy" id="269799"/>
    <lineage>
        <taxon>Bacteria</taxon>
        <taxon>Pseudomonadati</taxon>
        <taxon>Thermodesulfobacteriota</taxon>
        <taxon>Desulfuromonadia</taxon>
        <taxon>Geobacterales</taxon>
        <taxon>Geobacteraceae</taxon>
        <taxon>Geobacter</taxon>
    </lineage>
</organism>
<evidence type="ECO:0000255" key="1">
    <source>
        <dbReference type="HAMAP-Rule" id="MF_00376"/>
    </source>
</evidence>
<keyword id="KW-0067">ATP-binding</keyword>
<keyword id="KW-0173">Coenzyme A biosynthesis</keyword>
<keyword id="KW-0963">Cytoplasm</keyword>
<keyword id="KW-0418">Kinase</keyword>
<keyword id="KW-0547">Nucleotide-binding</keyword>
<keyword id="KW-1185">Reference proteome</keyword>
<keyword id="KW-0808">Transferase</keyword>
<accession>Q39R83</accession>
<proteinExistence type="inferred from homology"/>
<sequence length="201" mass="21828">MLVIGLTGGIASGKSTVARILERLGATIIDADLLAREAVLPGTPAHRAIVAAFGTEILLPDATIDRKALGRIVFANPDARRRLEAITHPAIARLSQARLAEARRSDAPAVFYVAPLLIEAGAADRVDDIWVVYADRETQLARLTERDGIGRGEAEQRLAAQMPMDEKASYGSAVIDNRGTSEETERQVVALWKERIEKNPR</sequence>